<comment type="function">
    <text evidence="2">With S4 and S5 plays an important role in translational accuracy.</text>
</comment>
<comment type="function">
    <text evidence="2">Interacts with and stabilizes bases of the 16S rRNA that are involved in tRNA selection in the A site and with the mRNA backbone. Located at the interface of the 30S and 50S subunits, it traverses the body of the 30S subunit contacting proteins on the other side and probably holding the rRNA structure together. The combined cluster of proteins S8, S12 and S17 appears to hold together the shoulder and platform of the 30S subunit.</text>
</comment>
<comment type="subunit">
    <text evidence="2">Part of the 30S ribosomal subunit. Contacts proteins S8 and S17. May interact with IF1 in the 30S initiation complex.</text>
</comment>
<comment type="similarity">
    <text evidence="2">Belongs to the universal ribosomal protein uS12 family.</text>
</comment>
<keyword id="KW-0488">Methylation</keyword>
<keyword id="KW-0687">Ribonucleoprotein</keyword>
<keyword id="KW-0689">Ribosomal protein</keyword>
<keyword id="KW-0694">RNA-binding</keyword>
<keyword id="KW-0699">rRNA-binding</keyword>
<keyword id="KW-0820">tRNA-binding</keyword>
<organism>
    <name type="scientific">Staphylococcus aureus (strain JH9)</name>
    <dbReference type="NCBI Taxonomy" id="359786"/>
    <lineage>
        <taxon>Bacteria</taxon>
        <taxon>Bacillati</taxon>
        <taxon>Bacillota</taxon>
        <taxon>Bacilli</taxon>
        <taxon>Bacillales</taxon>
        <taxon>Staphylococcaceae</taxon>
        <taxon>Staphylococcus</taxon>
    </lineage>
</organism>
<evidence type="ECO:0000250" key="1"/>
<evidence type="ECO:0000255" key="2">
    <source>
        <dbReference type="HAMAP-Rule" id="MF_00403"/>
    </source>
</evidence>
<evidence type="ECO:0000256" key="3">
    <source>
        <dbReference type="SAM" id="MobiDB-lite"/>
    </source>
</evidence>
<evidence type="ECO:0000305" key="4"/>
<feature type="chain" id="PRO_1000080420" description="Small ribosomal subunit protein uS12">
    <location>
        <begin position="1"/>
        <end position="137"/>
    </location>
</feature>
<feature type="region of interest" description="Disordered" evidence="3">
    <location>
        <begin position="1"/>
        <end position="55"/>
    </location>
</feature>
<feature type="region of interest" description="Disordered" evidence="3">
    <location>
        <begin position="118"/>
        <end position="137"/>
    </location>
</feature>
<feature type="modified residue" description="3-methylthioaspartic acid" evidence="1">
    <location>
        <position position="102"/>
    </location>
</feature>
<protein>
    <recommendedName>
        <fullName evidence="2">Small ribosomal subunit protein uS12</fullName>
    </recommendedName>
    <alternativeName>
        <fullName evidence="4">30S ribosomal protein S12</fullName>
    </alternativeName>
</protein>
<sequence length="137" mass="15287">MPTINQLVRKPRQSKIKKSDSPALNKGFNSKKKKFTDLNSPQKRGVCTRVGTMTPKKPNSALRKYARVRLSNNIEINAYIPGIGHNLQEHSVVLVRGGRVKDLPGVRYHIVRGALDTSGVDGRRQGRSLYGTKKPKN</sequence>
<gene>
    <name evidence="2" type="primary">rpsL</name>
    <name type="ordered locus">SaurJH9_0568</name>
</gene>
<accession>A5IQ99</accession>
<dbReference type="EMBL" id="CP000703">
    <property type="protein sequence ID" value="ABQ48372.1"/>
    <property type="molecule type" value="Genomic_DNA"/>
</dbReference>
<dbReference type="RefSeq" id="WP_001142337.1">
    <property type="nucleotide sequence ID" value="NC_009487.1"/>
</dbReference>
<dbReference type="SMR" id="A5IQ99"/>
<dbReference type="GeneID" id="98344879"/>
<dbReference type="KEGG" id="saj:SaurJH9_0568"/>
<dbReference type="HOGENOM" id="CLU_104295_1_2_9"/>
<dbReference type="GO" id="GO:0015935">
    <property type="term" value="C:small ribosomal subunit"/>
    <property type="evidence" value="ECO:0007669"/>
    <property type="project" value="InterPro"/>
</dbReference>
<dbReference type="GO" id="GO:0019843">
    <property type="term" value="F:rRNA binding"/>
    <property type="evidence" value="ECO:0007669"/>
    <property type="project" value="UniProtKB-UniRule"/>
</dbReference>
<dbReference type="GO" id="GO:0003735">
    <property type="term" value="F:structural constituent of ribosome"/>
    <property type="evidence" value="ECO:0007669"/>
    <property type="project" value="InterPro"/>
</dbReference>
<dbReference type="GO" id="GO:0000049">
    <property type="term" value="F:tRNA binding"/>
    <property type="evidence" value="ECO:0007669"/>
    <property type="project" value="UniProtKB-UniRule"/>
</dbReference>
<dbReference type="GO" id="GO:0006412">
    <property type="term" value="P:translation"/>
    <property type="evidence" value="ECO:0007669"/>
    <property type="project" value="UniProtKB-UniRule"/>
</dbReference>
<dbReference type="CDD" id="cd03368">
    <property type="entry name" value="Ribosomal_S12"/>
    <property type="match status" value="1"/>
</dbReference>
<dbReference type="FunFam" id="2.40.50.140:FF:000001">
    <property type="entry name" value="30S ribosomal protein S12"/>
    <property type="match status" value="1"/>
</dbReference>
<dbReference type="Gene3D" id="2.40.50.140">
    <property type="entry name" value="Nucleic acid-binding proteins"/>
    <property type="match status" value="1"/>
</dbReference>
<dbReference type="HAMAP" id="MF_00403_B">
    <property type="entry name" value="Ribosomal_uS12_B"/>
    <property type="match status" value="1"/>
</dbReference>
<dbReference type="InterPro" id="IPR012340">
    <property type="entry name" value="NA-bd_OB-fold"/>
</dbReference>
<dbReference type="InterPro" id="IPR006032">
    <property type="entry name" value="Ribosomal_uS12"/>
</dbReference>
<dbReference type="InterPro" id="IPR005679">
    <property type="entry name" value="Ribosomal_uS12_bac"/>
</dbReference>
<dbReference type="NCBIfam" id="TIGR00981">
    <property type="entry name" value="rpsL_bact"/>
    <property type="match status" value="1"/>
</dbReference>
<dbReference type="PANTHER" id="PTHR11652">
    <property type="entry name" value="30S RIBOSOMAL PROTEIN S12 FAMILY MEMBER"/>
    <property type="match status" value="1"/>
</dbReference>
<dbReference type="Pfam" id="PF00164">
    <property type="entry name" value="Ribosom_S12_S23"/>
    <property type="match status" value="1"/>
</dbReference>
<dbReference type="PIRSF" id="PIRSF002133">
    <property type="entry name" value="Ribosomal_S12/S23"/>
    <property type="match status" value="1"/>
</dbReference>
<dbReference type="PRINTS" id="PR01034">
    <property type="entry name" value="RIBOSOMALS12"/>
</dbReference>
<dbReference type="SUPFAM" id="SSF50249">
    <property type="entry name" value="Nucleic acid-binding proteins"/>
    <property type="match status" value="1"/>
</dbReference>
<dbReference type="PROSITE" id="PS00055">
    <property type="entry name" value="RIBOSOMAL_S12"/>
    <property type="match status" value="1"/>
</dbReference>
<proteinExistence type="inferred from homology"/>
<name>RS12_STAA9</name>
<reference key="1">
    <citation type="submission" date="2007-05" db="EMBL/GenBank/DDBJ databases">
        <title>Complete sequence of chromosome of Staphylococcus aureus subsp. aureus JH9.</title>
        <authorList>
            <consortium name="US DOE Joint Genome Institute"/>
            <person name="Copeland A."/>
            <person name="Lucas S."/>
            <person name="Lapidus A."/>
            <person name="Barry K."/>
            <person name="Detter J.C."/>
            <person name="Glavina del Rio T."/>
            <person name="Hammon N."/>
            <person name="Israni S."/>
            <person name="Pitluck S."/>
            <person name="Chain P."/>
            <person name="Malfatti S."/>
            <person name="Shin M."/>
            <person name="Vergez L."/>
            <person name="Schmutz J."/>
            <person name="Larimer F."/>
            <person name="Land M."/>
            <person name="Hauser L."/>
            <person name="Kyrpides N."/>
            <person name="Kim E."/>
            <person name="Tomasz A."/>
            <person name="Richardson P."/>
        </authorList>
    </citation>
    <scope>NUCLEOTIDE SEQUENCE [LARGE SCALE GENOMIC DNA]</scope>
    <source>
        <strain>JH9</strain>
    </source>
</reference>